<proteinExistence type="inferred from homology"/>
<comment type="catalytic activity">
    <reaction evidence="1">
        <text>5-amino-1-(5-phospho-D-ribosyl)imidazole-4-carboxylate + L-aspartate + ATP = (2S)-2-[5-amino-1-(5-phospho-beta-D-ribosyl)imidazole-4-carboxamido]succinate + ADP + phosphate + 2 H(+)</text>
        <dbReference type="Rhea" id="RHEA:22628"/>
        <dbReference type="ChEBI" id="CHEBI:15378"/>
        <dbReference type="ChEBI" id="CHEBI:29991"/>
        <dbReference type="ChEBI" id="CHEBI:30616"/>
        <dbReference type="ChEBI" id="CHEBI:43474"/>
        <dbReference type="ChEBI" id="CHEBI:58443"/>
        <dbReference type="ChEBI" id="CHEBI:77657"/>
        <dbReference type="ChEBI" id="CHEBI:456216"/>
        <dbReference type="EC" id="6.3.2.6"/>
    </reaction>
</comment>
<comment type="pathway">
    <text evidence="1">Purine metabolism; IMP biosynthesis via de novo pathway; 5-amino-1-(5-phospho-D-ribosyl)imidazole-4-carboxamide from 5-amino-1-(5-phospho-D-ribosyl)imidazole-4-carboxylate: step 1/2.</text>
</comment>
<comment type="similarity">
    <text evidence="1">Belongs to the SAICAR synthetase family.</text>
</comment>
<gene>
    <name evidence="1" type="primary">purC</name>
    <name type="ordered locus">Mboo_2202</name>
</gene>
<accession>A7IAF5</accession>
<feature type="chain" id="PRO_1000018728" description="Phosphoribosylaminoimidazole-succinocarboxamide synthase">
    <location>
        <begin position="1"/>
        <end position="256"/>
    </location>
</feature>
<feature type="region of interest" description="Disordered" evidence="2">
    <location>
        <begin position="234"/>
        <end position="256"/>
    </location>
</feature>
<feature type="compositionally biased region" description="Basic residues" evidence="2">
    <location>
        <begin position="240"/>
        <end position="256"/>
    </location>
</feature>
<sequence>MKQKKLLYTGKAKSVYHTDEKGTLIVEFRDDITAFDGGKKDTLKNKGSYNAGVSAFFFSYLEKNGVKTHFLEMQDESRMAVRELSMIPLEVIVRNYAAGSIVRNYPFKEGTPLKPPVIVIDYKDDSRHDPMLNDELIVALKLATPAELKKIKAIALKINTLLSGLLAKQGITLVDFKLEFGRQGTTIYLGDEISMDSMRLWDKKTGESLDKDVYRFNKGDVMATYNRVAARITKPQKPAAAKKKAPVSKKTVKRTR</sequence>
<keyword id="KW-0067">ATP-binding</keyword>
<keyword id="KW-0436">Ligase</keyword>
<keyword id="KW-0547">Nucleotide-binding</keyword>
<keyword id="KW-0658">Purine biosynthesis</keyword>
<keyword id="KW-1185">Reference proteome</keyword>
<evidence type="ECO:0000255" key="1">
    <source>
        <dbReference type="HAMAP-Rule" id="MF_00137"/>
    </source>
</evidence>
<evidence type="ECO:0000256" key="2">
    <source>
        <dbReference type="SAM" id="MobiDB-lite"/>
    </source>
</evidence>
<dbReference type="EC" id="6.3.2.6" evidence="1"/>
<dbReference type="EMBL" id="CP000780">
    <property type="protein sequence ID" value="ABS56716.1"/>
    <property type="molecule type" value="Genomic_DNA"/>
</dbReference>
<dbReference type="RefSeq" id="WP_012107776.1">
    <property type="nucleotide sequence ID" value="NC_009712.1"/>
</dbReference>
<dbReference type="SMR" id="A7IAF5"/>
<dbReference type="STRING" id="456442.Mboo_2202"/>
<dbReference type="GeneID" id="5411222"/>
<dbReference type="KEGG" id="mbn:Mboo_2202"/>
<dbReference type="eggNOG" id="arCOG04421">
    <property type="taxonomic scope" value="Archaea"/>
</dbReference>
<dbReference type="HOGENOM" id="CLU_061495_2_0_2"/>
<dbReference type="OrthoDB" id="10775at2157"/>
<dbReference type="UniPathway" id="UPA00074">
    <property type="reaction ID" value="UER00131"/>
</dbReference>
<dbReference type="Proteomes" id="UP000002408">
    <property type="component" value="Chromosome"/>
</dbReference>
<dbReference type="GO" id="GO:0005524">
    <property type="term" value="F:ATP binding"/>
    <property type="evidence" value="ECO:0007669"/>
    <property type="project" value="UniProtKB-KW"/>
</dbReference>
<dbReference type="GO" id="GO:0004639">
    <property type="term" value="F:phosphoribosylaminoimidazolesuccinocarboxamide synthase activity"/>
    <property type="evidence" value="ECO:0007669"/>
    <property type="project" value="UniProtKB-UniRule"/>
</dbReference>
<dbReference type="GO" id="GO:0006189">
    <property type="term" value="P:'de novo' IMP biosynthetic process"/>
    <property type="evidence" value="ECO:0007669"/>
    <property type="project" value="UniProtKB-UniRule"/>
</dbReference>
<dbReference type="GO" id="GO:0009236">
    <property type="term" value="P:cobalamin biosynthetic process"/>
    <property type="evidence" value="ECO:0007669"/>
    <property type="project" value="InterPro"/>
</dbReference>
<dbReference type="CDD" id="cd01415">
    <property type="entry name" value="SAICAR_synt_PurC"/>
    <property type="match status" value="1"/>
</dbReference>
<dbReference type="FunFam" id="3.30.470.20:FF:000006">
    <property type="entry name" value="Phosphoribosylaminoimidazole-succinocarboxamide synthase"/>
    <property type="match status" value="1"/>
</dbReference>
<dbReference type="Gene3D" id="3.30.470.20">
    <property type="entry name" value="ATP-grasp fold, B domain"/>
    <property type="match status" value="1"/>
</dbReference>
<dbReference type="Gene3D" id="3.30.200.20">
    <property type="entry name" value="Phosphorylase Kinase, domain 1"/>
    <property type="match status" value="1"/>
</dbReference>
<dbReference type="HAMAP" id="MF_00137">
    <property type="entry name" value="SAICAR_synth"/>
    <property type="match status" value="1"/>
</dbReference>
<dbReference type="InterPro" id="IPR028923">
    <property type="entry name" value="SAICAR_synt/ADE2_N"/>
</dbReference>
<dbReference type="InterPro" id="IPR033934">
    <property type="entry name" value="SAICAR_synt_PurC"/>
</dbReference>
<dbReference type="InterPro" id="IPR001636">
    <property type="entry name" value="SAICAR_synth"/>
</dbReference>
<dbReference type="InterPro" id="IPR050089">
    <property type="entry name" value="SAICAR_synthetase"/>
</dbReference>
<dbReference type="InterPro" id="IPR018236">
    <property type="entry name" value="SAICAR_synthetase_CS"/>
</dbReference>
<dbReference type="NCBIfam" id="TIGR00081">
    <property type="entry name" value="purC"/>
    <property type="match status" value="1"/>
</dbReference>
<dbReference type="PANTHER" id="PTHR43599">
    <property type="entry name" value="MULTIFUNCTIONAL PROTEIN ADE2"/>
    <property type="match status" value="1"/>
</dbReference>
<dbReference type="PANTHER" id="PTHR43599:SF3">
    <property type="entry name" value="SI:DKEY-6E2.2"/>
    <property type="match status" value="1"/>
</dbReference>
<dbReference type="Pfam" id="PF01259">
    <property type="entry name" value="SAICAR_synt"/>
    <property type="match status" value="1"/>
</dbReference>
<dbReference type="SUPFAM" id="SSF56104">
    <property type="entry name" value="SAICAR synthase-like"/>
    <property type="match status" value="1"/>
</dbReference>
<dbReference type="PROSITE" id="PS01057">
    <property type="entry name" value="SAICAR_SYNTHETASE_1"/>
    <property type="match status" value="1"/>
</dbReference>
<dbReference type="PROSITE" id="PS01058">
    <property type="entry name" value="SAICAR_SYNTHETASE_2"/>
    <property type="match status" value="1"/>
</dbReference>
<organism>
    <name type="scientific">Methanoregula boonei (strain DSM 21154 / JCM 14090 / 6A8)</name>
    <dbReference type="NCBI Taxonomy" id="456442"/>
    <lineage>
        <taxon>Archaea</taxon>
        <taxon>Methanobacteriati</taxon>
        <taxon>Methanobacteriota</taxon>
        <taxon>Stenosarchaea group</taxon>
        <taxon>Methanomicrobia</taxon>
        <taxon>Methanomicrobiales</taxon>
        <taxon>Methanoregulaceae</taxon>
        <taxon>Methanoregula</taxon>
    </lineage>
</organism>
<reference key="1">
    <citation type="journal article" date="2015" name="Microbiology">
        <title>Genome of Methanoregula boonei 6A8 reveals adaptations to oligotrophic peatland environments.</title>
        <authorList>
            <person name="Braeuer S."/>
            <person name="Cadillo-Quiroz H."/>
            <person name="Kyrpides N."/>
            <person name="Woyke T."/>
            <person name="Goodwin L."/>
            <person name="Detter C."/>
            <person name="Podell S."/>
            <person name="Yavitt J.B."/>
            <person name="Zinder S.H."/>
        </authorList>
    </citation>
    <scope>NUCLEOTIDE SEQUENCE [LARGE SCALE GENOMIC DNA]</scope>
    <source>
        <strain>DSM 21154 / JCM 14090 / 6A8</strain>
    </source>
</reference>
<protein>
    <recommendedName>
        <fullName evidence="1">Phosphoribosylaminoimidazole-succinocarboxamide synthase</fullName>
        <ecNumber evidence="1">6.3.2.6</ecNumber>
    </recommendedName>
    <alternativeName>
        <fullName evidence="1">SAICAR synthetase</fullName>
    </alternativeName>
</protein>
<name>PUR7_METB6</name>